<name>CDH_ECOLU</name>
<organism>
    <name type="scientific">Escherichia coli O17:K52:H18 (strain UMN026 / ExPEC)</name>
    <dbReference type="NCBI Taxonomy" id="585056"/>
    <lineage>
        <taxon>Bacteria</taxon>
        <taxon>Pseudomonadati</taxon>
        <taxon>Pseudomonadota</taxon>
        <taxon>Gammaproteobacteria</taxon>
        <taxon>Enterobacterales</taxon>
        <taxon>Enterobacteriaceae</taxon>
        <taxon>Escherichia</taxon>
    </lineage>
</organism>
<sequence>MKKAGLLFLVMIVIAVVAAGIGYWKLTGEESDTLRKIVLEECLPNQQQNQNPSPCAEVKPNAGYVVLKDLNGPLQYLLMPTYRINGTESPLLTDPSTPNFFWLAWQARDFMSKKYGQPVPDRAVSLAINSRTGRTQNHFHIHISCIRPDVREQLDNNLANISSRWLPLPGGLRGHEYLARRVTESELVQRSPFMMLAEEVPEAREHMGSYGLAMVRQSDNSFVLLATQRNLLTLNRASAEEIQDHQCEILR</sequence>
<gene>
    <name evidence="1" type="primary">cdh</name>
    <name type="ordered locus">ECUMN_4446</name>
</gene>
<keyword id="KW-0997">Cell inner membrane</keyword>
<keyword id="KW-1003">Cell membrane</keyword>
<keyword id="KW-0378">Hydrolase</keyword>
<keyword id="KW-0444">Lipid biosynthesis</keyword>
<keyword id="KW-0443">Lipid metabolism</keyword>
<keyword id="KW-0472">Membrane</keyword>
<keyword id="KW-0594">Phospholipid biosynthesis</keyword>
<keyword id="KW-1208">Phospholipid metabolism</keyword>
<keyword id="KW-0812">Transmembrane</keyword>
<keyword id="KW-1133">Transmembrane helix</keyword>
<dbReference type="EC" id="3.6.1.26" evidence="1"/>
<dbReference type="EMBL" id="CU928163">
    <property type="protein sequence ID" value="CAR15572.1"/>
    <property type="molecule type" value="Genomic_DNA"/>
</dbReference>
<dbReference type="RefSeq" id="WP_000708998.1">
    <property type="nucleotide sequence ID" value="NC_011751.1"/>
</dbReference>
<dbReference type="RefSeq" id="YP_002415061.1">
    <property type="nucleotide sequence ID" value="NC_011751.1"/>
</dbReference>
<dbReference type="SMR" id="B7NFL5"/>
<dbReference type="STRING" id="585056.ECUMN_4446"/>
<dbReference type="GeneID" id="93777980"/>
<dbReference type="KEGG" id="eum:ECUMN_4446"/>
<dbReference type="PATRIC" id="fig|585056.7.peg.4616"/>
<dbReference type="HOGENOM" id="CLU_077117_0_1_6"/>
<dbReference type="UniPathway" id="UPA00609">
    <property type="reaction ID" value="UER00664"/>
</dbReference>
<dbReference type="Proteomes" id="UP000007097">
    <property type="component" value="Chromosome"/>
</dbReference>
<dbReference type="GO" id="GO:0005886">
    <property type="term" value="C:plasma membrane"/>
    <property type="evidence" value="ECO:0007669"/>
    <property type="project" value="UniProtKB-SubCell"/>
</dbReference>
<dbReference type="GO" id="GO:0008715">
    <property type="term" value="F:CDP-diacylglycerol diphosphatase activity"/>
    <property type="evidence" value="ECO:0007669"/>
    <property type="project" value="UniProtKB-UniRule"/>
</dbReference>
<dbReference type="GO" id="GO:0046342">
    <property type="term" value="P:CDP-diacylglycerol catabolic process"/>
    <property type="evidence" value="ECO:0007669"/>
    <property type="project" value="UniProtKB-UniRule"/>
</dbReference>
<dbReference type="GO" id="GO:0008654">
    <property type="term" value="P:phospholipid biosynthetic process"/>
    <property type="evidence" value="ECO:0007669"/>
    <property type="project" value="UniProtKB-KW"/>
</dbReference>
<dbReference type="FunFam" id="3.30.428.30:FF:000001">
    <property type="entry name" value="CDP-diacylglycerol pyrophosphatase"/>
    <property type="match status" value="1"/>
</dbReference>
<dbReference type="Gene3D" id="3.30.428.30">
    <property type="entry name" value="HIT family - CDH-like"/>
    <property type="match status" value="1"/>
</dbReference>
<dbReference type="HAMAP" id="MF_00319">
    <property type="entry name" value="Cdh"/>
    <property type="match status" value="1"/>
</dbReference>
<dbReference type="InterPro" id="IPR003763">
    <property type="entry name" value="CDP-diacylglyc_Pase"/>
</dbReference>
<dbReference type="InterPro" id="IPR015993">
    <property type="entry name" value="CDP-diacylglyc_Pase_proteobac"/>
</dbReference>
<dbReference type="InterPro" id="IPR036265">
    <property type="entry name" value="HIT-like_sf"/>
</dbReference>
<dbReference type="NCBIfam" id="TIGR00672">
    <property type="entry name" value="cdh"/>
    <property type="match status" value="1"/>
</dbReference>
<dbReference type="NCBIfam" id="NF003986">
    <property type="entry name" value="PRK05471.1-5"/>
    <property type="match status" value="1"/>
</dbReference>
<dbReference type="NCBIfam" id="NF003987">
    <property type="entry name" value="PRK05471.1-6"/>
    <property type="match status" value="1"/>
</dbReference>
<dbReference type="Pfam" id="PF02611">
    <property type="entry name" value="CDH"/>
    <property type="match status" value="1"/>
</dbReference>
<dbReference type="PIRSF" id="PIRSF001273">
    <property type="entry name" value="CDH"/>
    <property type="match status" value="1"/>
</dbReference>
<dbReference type="SUPFAM" id="SSF54197">
    <property type="entry name" value="HIT-like"/>
    <property type="match status" value="1"/>
</dbReference>
<accession>B7NFL5</accession>
<proteinExistence type="inferred from homology"/>
<protein>
    <recommendedName>
        <fullName evidence="1">CDP-diacylglycerol pyrophosphatase</fullName>
        <ecNumber evidence="1">3.6.1.26</ecNumber>
    </recommendedName>
    <alternativeName>
        <fullName evidence="1">CDP-diacylglycerol phosphatidylhydrolase</fullName>
    </alternativeName>
    <alternativeName>
        <fullName evidence="1">CDP-diglyceride hydrolase</fullName>
    </alternativeName>
</protein>
<evidence type="ECO:0000255" key="1">
    <source>
        <dbReference type="HAMAP-Rule" id="MF_00319"/>
    </source>
</evidence>
<comment type="catalytic activity">
    <reaction evidence="1">
        <text>a CDP-1,2-diacyl-sn-glycerol + H2O = a 1,2-diacyl-sn-glycero-3-phosphate + CMP + 2 H(+)</text>
        <dbReference type="Rhea" id="RHEA:15221"/>
        <dbReference type="ChEBI" id="CHEBI:15377"/>
        <dbReference type="ChEBI" id="CHEBI:15378"/>
        <dbReference type="ChEBI" id="CHEBI:58332"/>
        <dbReference type="ChEBI" id="CHEBI:58608"/>
        <dbReference type="ChEBI" id="CHEBI:60377"/>
        <dbReference type="EC" id="3.6.1.26"/>
    </reaction>
</comment>
<comment type="pathway">
    <text evidence="1">Phospholipid metabolism; CDP-diacylglycerol degradation; phosphatidate from CDP-diacylglycerol: step 1/1.</text>
</comment>
<comment type="subcellular location">
    <subcellularLocation>
        <location evidence="1">Cell inner membrane</location>
        <topology evidence="1">Single-pass membrane protein</topology>
    </subcellularLocation>
</comment>
<comment type="similarity">
    <text evidence="1">Belongs to the Cdh family.</text>
</comment>
<feature type="chain" id="PRO_1000119586" description="CDP-diacylglycerol pyrophosphatase">
    <location>
        <begin position="1"/>
        <end position="251"/>
    </location>
</feature>
<feature type="transmembrane region" description="Helical" evidence="1">
    <location>
        <begin position="4"/>
        <end position="24"/>
    </location>
</feature>
<reference key="1">
    <citation type="journal article" date="2009" name="PLoS Genet.">
        <title>Organised genome dynamics in the Escherichia coli species results in highly diverse adaptive paths.</title>
        <authorList>
            <person name="Touchon M."/>
            <person name="Hoede C."/>
            <person name="Tenaillon O."/>
            <person name="Barbe V."/>
            <person name="Baeriswyl S."/>
            <person name="Bidet P."/>
            <person name="Bingen E."/>
            <person name="Bonacorsi S."/>
            <person name="Bouchier C."/>
            <person name="Bouvet O."/>
            <person name="Calteau A."/>
            <person name="Chiapello H."/>
            <person name="Clermont O."/>
            <person name="Cruveiller S."/>
            <person name="Danchin A."/>
            <person name="Diard M."/>
            <person name="Dossat C."/>
            <person name="Karoui M.E."/>
            <person name="Frapy E."/>
            <person name="Garry L."/>
            <person name="Ghigo J.M."/>
            <person name="Gilles A.M."/>
            <person name="Johnson J."/>
            <person name="Le Bouguenec C."/>
            <person name="Lescat M."/>
            <person name="Mangenot S."/>
            <person name="Martinez-Jehanne V."/>
            <person name="Matic I."/>
            <person name="Nassif X."/>
            <person name="Oztas S."/>
            <person name="Petit M.A."/>
            <person name="Pichon C."/>
            <person name="Rouy Z."/>
            <person name="Ruf C.S."/>
            <person name="Schneider D."/>
            <person name="Tourret J."/>
            <person name="Vacherie B."/>
            <person name="Vallenet D."/>
            <person name="Medigue C."/>
            <person name="Rocha E.P.C."/>
            <person name="Denamur E."/>
        </authorList>
    </citation>
    <scope>NUCLEOTIDE SEQUENCE [LARGE SCALE GENOMIC DNA]</scope>
    <source>
        <strain>UMN026 / ExPEC</strain>
    </source>
</reference>